<organism>
    <name type="scientific">Arabidopsis thaliana</name>
    <name type="common">Mouse-ear cress</name>
    <dbReference type="NCBI Taxonomy" id="3702"/>
    <lineage>
        <taxon>Eukaryota</taxon>
        <taxon>Viridiplantae</taxon>
        <taxon>Streptophyta</taxon>
        <taxon>Embryophyta</taxon>
        <taxon>Tracheophyta</taxon>
        <taxon>Spermatophyta</taxon>
        <taxon>Magnoliopsida</taxon>
        <taxon>eudicotyledons</taxon>
        <taxon>Gunneridae</taxon>
        <taxon>Pentapetalae</taxon>
        <taxon>rosids</taxon>
        <taxon>malvids</taxon>
        <taxon>Brassicales</taxon>
        <taxon>Brassicaceae</taxon>
        <taxon>Camelineae</taxon>
        <taxon>Arabidopsis</taxon>
    </lineage>
</organism>
<name>E1314_ARATH</name>
<evidence type="ECO:0000250" key="1">
    <source>
        <dbReference type="UniProtKB" id="O22317"/>
    </source>
</evidence>
<evidence type="ECO:0000255" key="2"/>
<evidence type="ECO:0000305" key="3"/>
<reference key="1">
    <citation type="journal article" date="1999" name="Nature">
        <title>Sequence and analysis of chromosome 2 of the plant Arabidopsis thaliana.</title>
        <authorList>
            <person name="Lin X."/>
            <person name="Kaul S."/>
            <person name="Rounsley S.D."/>
            <person name="Shea T.P."/>
            <person name="Benito M.-I."/>
            <person name="Town C.D."/>
            <person name="Fujii C.Y."/>
            <person name="Mason T.M."/>
            <person name="Bowman C.L."/>
            <person name="Barnstead M.E."/>
            <person name="Feldblyum T.V."/>
            <person name="Buell C.R."/>
            <person name="Ketchum K.A."/>
            <person name="Lee J.J."/>
            <person name="Ronning C.M."/>
            <person name="Koo H.L."/>
            <person name="Moffat K.S."/>
            <person name="Cronin L.A."/>
            <person name="Shen M."/>
            <person name="Pai G."/>
            <person name="Van Aken S."/>
            <person name="Umayam L."/>
            <person name="Tallon L.J."/>
            <person name="Gill J.E."/>
            <person name="Adams M.D."/>
            <person name="Carrera A.J."/>
            <person name="Creasy T.H."/>
            <person name="Goodman H.M."/>
            <person name="Somerville C.R."/>
            <person name="Copenhaver G.P."/>
            <person name="Preuss D."/>
            <person name="Nierman W.C."/>
            <person name="White O."/>
            <person name="Eisen J.A."/>
            <person name="Salzberg S.L."/>
            <person name="Fraser C.M."/>
            <person name="Venter J.C."/>
        </authorList>
    </citation>
    <scope>NUCLEOTIDE SEQUENCE [LARGE SCALE GENOMIC DNA]</scope>
    <source>
        <strain>cv. Columbia</strain>
    </source>
</reference>
<reference key="2">
    <citation type="journal article" date="2017" name="Plant J.">
        <title>Araport11: a complete reannotation of the Arabidopsis thaliana reference genome.</title>
        <authorList>
            <person name="Cheng C.Y."/>
            <person name="Krishnakumar V."/>
            <person name="Chan A.P."/>
            <person name="Thibaud-Nissen F."/>
            <person name="Schobel S."/>
            <person name="Town C.D."/>
        </authorList>
    </citation>
    <scope>GENOME REANNOTATION</scope>
    <source>
        <strain>cv. Columbia</strain>
    </source>
</reference>
<reference key="3">
    <citation type="journal article" date="2003" name="Science">
        <title>Empirical analysis of transcriptional activity in the Arabidopsis genome.</title>
        <authorList>
            <person name="Yamada K."/>
            <person name="Lim J."/>
            <person name="Dale J.M."/>
            <person name="Chen H."/>
            <person name="Shinn P."/>
            <person name="Palm C.J."/>
            <person name="Southwick A.M."/>
            <person name="Wu H.C."/>
            <person name="Kim C.J."/>
            <person name="Nguyen M."/>
            <person name="Pham P.K."/>
            <person name="Cheuk R.F."/>
            <person name="Karlin-Newmann G."/>
            <person name="Liu S.X."/>
            <person name="Lam B."/>
            <person name="Sakano H."/>
            <person name="Wu T."/>
            <person name="Yu G."/>
            <person name="Miranda M."/>
            <person name="Quach H.L."/>
            <person name="Tripp M."/>
            <person name="Chang C.H."/>
            <person name="Lee J.M."/>
            <person name="Toriumi M.J."/>
            <person name="Chan M.M."/>
            <person name="Tang C.C."/>
            <person name="Onodera C.S."/>
            <person name="Deng J.M."/>
            <person name="Akiyama K."/>
            <person name="Ansari Y."/>
            <person name="Arakawa T."/>
            <person name="Banh J."/>
            <person name="Banno F."/>
            <person name="Bowser L."/>
            <person name="Brooks S.Y."/>
            <person name="Carninci P."/>
            <person name="Chao Q."/>
            <person name="Choy N."/>
            <person name="Enju A."/>
            <person name="Goldsmith A.D."/>
            <person name="Gurjal M."/>
            <person name="Hansen N.F."/>
            <person name="Hayashizaki Y."/>
            <person name="Johnson-Hopson C."/>
            <person name="Hsuan V.W."/>
            <person name="Iida K."/>
            <person name="Karnes M."/>
            <person name="Khan S."/>
            <person name="Koesema E."/>
            <person name="Ishida J."/>
            <person name="Jiang P.X."/>
            <person name="Jones T."/>
            <person name="Kawai J."/>
            <person name="Kamiya A."/>
            <person name="Meyers C."/>
            <person name="Nakajima M."/>
            <person name="Narusaka M."/>
            <person name="Seki M."/>
            <person name="Sakurai T."/>
            <person name="Satou M."/>
            <person name="Tamse R."/>
            <person name="Vaysberg M."/>
            <person name="Wallender E.K."/>
            <person name="Wong C."/>
            <person name="Yamamura Y."/>
            <person name="Yuan S."/>
            <person name="Shinozaki K."/>
            <person name="Davis R.W."/>
            <person name="Theologis A."/>
            <person name="Ecker J.R."/>
        </authorList>
    </citation>
    <scope>NUCLEOTIDE SEQUENCE [LARGE SCALE MRNA] (ISOFORM 1)</scope>
    <source>
        <strain>cv. Columbia</strain>
    </source>
</reference>
<reference key="4">
    <citation type="submission" date="2002-03" db="EMBL/GenBank/DDBJ databases">
        <title>Full-length cDNA from Arabidopsis thaliana.</title>
        <authorList>
            <person name="Brover V.V."/>
            <person name="Troukhan M.E."/>
            <person name="Alexandrov N.A."/>
            <person name="Lu Y.-P."/>
            <person name="Flavell R.B."/>
            <person name="Feldmann K.A."/>
        </authorList>
    </citation>
    <scope>NUCLEOTIDE SEQUENCE [LARGE SCALE MRNA] (ISOFORM 1)</scope>
</reference>
<gene>
    <name type="ordered locus">At2g27500</name>
    <name type="ORF">F10A12.18</name>
</gene>
<sequence>MATHSLSFFFRVLLLLFLTLSERIKGQGVGINYGQIANNLPSPARVAVLLRSLNITRVKLYDADPNVLFSFSNSQVDFMIGLGNEYLQNMSTDPTKAQDWLQQRLEPHISKTRITSIVVGNEIFKTNDHVLIQSLLPAMKSVYAALTNLGLEKQVTVTSAHSLDILSTSYPPSSGSFKEEFIQYLQPLLDFHSQIESPFLINAYPFFAYKDSPKEVPLEYVLFQPNQGMVDPNTNLHYDNMLFAQVDALYSAIKTLGHTDIEVRISETGWPSKGDENEIGASPENAALYNGNLLKLIQQRKGTPAKQSVPIDVYVFALFNENLKPGPVSERNYGLFYPDGKPVYNVGMQGYLPDIIYTSRATTIKILNLWRVVMGLAVAWFILDMGDKMRMR</sequence>
<accession>Q9ZQG9</accession>
<accession>Q2V449</accession>
<accession>Q3EBS8</accession>
<accession>Q8VWJ3</accession>
<protein>
    <recommendedName>
        <fullName>Glucan endo-1,3-beta-glucosidase 14</fullName>
        <ecNumber>3.2.1.39</ecNumber>
    </recommendedName>
    <alternativeName>
        <fullName>(1-&gt;3)-beta-glucan endohydrolase 14</fullName>
        <shortName>(1-&gt;3)-beta-glucanase 14</shortName>
    </alternativeName>
    <alternativeName>
        <fullName>Beta-1,3-endoglucanase 14</fullName>
        <shortName>Beta-1,3-glucanase 14</shortName>
    </alternativeName>
</protein>
<dbReference type="EC" id="3.2.1.39"/>
<dbReference type="EMBL" id="AC006232">
    <property type="protein sequence ID" value="AAD15611.2"/>
    <property type="molecule type" value="Genomic_DNA"/>
</dbReference>
<dbReference type="EMBL" id="CP002685">
    <property type="protein sequence ID" value="AEC08004.1"/>
    <property type="molecule type" value="Genomic_DNA"/>
</dbReference>
<dbReference type="EMBL" id="CP002685">
    <property type="protein sequence ID" value="AEC08005.1"/>
    <property type="molecule type" value="Genomic_DNA"/>
</dbReference>
<dbReference type="EMBL" id="CP002685">
    <property type="protein sequence ID" value="AEC08006.1"/>
    <property type="molecule type" value="Genomic_DNA"/>
</dbReference>
<dbReference type="EMBL" id="AY096525">
    <property type="protein sequence ID" value="AAM20175.1"/>
    <property type="molecule type" value="mRNA"/>
</dbReference>
<dbReference type="EMBL" id="AY065273">
    <property type="protein sequence ID" value="AAL38749.1"/>
    <property type="molecule type" value="mRNA"/>
</dbReference>
<dbReference type="EMBL" id="AY065085">
    <property type="protein sequence ID" value="AAL38261.1"/>
    <property type="molecule type" value="mRNA"/>
</dbReference>
<dbReference type="EMBL" id="AY084587">
    <property type="protein sequence ID" value="AAM61152.1"/>
    <property type="molecule type" value="mRNA"/>
</dbReference>
<dbReference type="PIR" id="F84673">
    <property type="entry name" value="F84673"/>
</dbReference>
<dbReference type="RefSeq" id="NP_001031432.1">
    <molecule id="Q9ZQG9-3"/>
    <property type="nucleotide sequence ID" value="NM_001036355.1"/>
</dbReference>
<dbReference type="RefSeq" id="NP_565652.1">
    <molecule id="Q9ZQG9-1"/>
    <property type="nucleotide sequence ID" value="NM_128310.4"/>
</dbReference>
<dbReference type="RefSeq" id="NP_973548.1">
    <molecule id="Q9ZQG9-2"/>
    <property type="nucleotide sequence ID" value="NM_201819.2"/>
</dbReference>
<dbReference type="SMR" id="Q9ZQG9"/>
<dbReference type="FunCoup" id="Q9ZQG9">
    <property type="interactions" value="2"/>
</dbReference>
<dbReference type="STRING" id="3702.Q9ZQG9"/>
<dbReference type="CAZy" id="GH17">
    <property type="family name" value="Glycoside Hydrolase Family 17"/>
</dbReference>
<dbReference type="GlyGen" id="Q9ZQG9">
    <property type="glycosylation" value="2 sites"/>
</dbReference>
<dbReference type="PaxDb" id="3702-AT2G27500.1"/>
<dbReference type="ProteomicsDB" id="222025">
    <molecule id="Q9ZQG9-1"/>
</dbReference>
<dbReference type="EnsemblPlants" id="AT2G27500.1">
    <molecule id="Q9ZQG9-1"/>
    <property type="protein sequence ID" value="AT2G27500.1"/>
    <property type="gene ID" value="AT2G27500"/>
</dbReference>
<dbReference type="EnsemblPlants" id="AT2G27500.2">
    <molecule id="Q9ZQG9-2"/>
    <property type="protein sequence ID" value="AT2G27500.2"/>
    <property type="gene ID" value="AT2G27500"/>
</dbReference>
<dbReference type="EnsemblPlants" id="AT2G27500.3">
    <molecule id="Q9ZQG9-3"/>
    <property type="protein sequence ID" value="AT2G27500.3"/>
    <property type="gene ID" value="AT2G27500"/>
</dbReference>
<dbReference type="GeneID" id="817295"/>
<dbReference type="Gramene" id="AT2G27500.1">
    <molecule id="Q9ZQG9-1"/>
    <property type="protein sequence ID" value="AT2G27500.1"/>
    <property type="gene ID" value="AT2G27500"/>
</dbReference>
<dbReference type="Gramene" id="AT2G27500.2">
    <molecule id="Q9ZQG9-2"/>
    <property type="protein sequence ID" value="AT2G27500.2"/>
    <property type="gene ID" value="AT2G27500"/>
</dbReference>
<dbReference type="Gramene" id="AT2G27500.3">
    <molecule id="Q9ZQG9-3"/>
    <property type="protein sequence ID" value="AT2G27500.3"/>
    <property type="gene ID" value="AT2G27500"/>
</dbReference>
<dbReference type="KEGG" id="ath:AT2G27500"/>
<dbReference type="Araport" id="AT2G27500"/>
<dbReference type="TAIR" id="AT2G27500"/>
<dbReference type="eggNOG" id="ENOG502QQ1M">
    <property type="taxonomic scope" value="Eukaryota"/>
</dbReference>
<dbReference type="InParanoid" id="Q9ZQG9"/>
<dbReference type="OMA" id="CINSNVT"/>
<dbReference type="OrthoDB" id="77201at2759"/>
<dbReference type="PhylomeDB" id="Q9ZQG9"/>
<dbReference type="BioCyc" id="ARA:AT2G27500-MONOMER"/>
<dbReference type="PRO" id="PR:Q9ZQG9"/>
<dbReference type="Proteomes" id="UP000006548">
    <property type="component" value="Chromosome 2"/>
</dbReference>
<dbReference type="ExpressionAtlas" id="Q9ZQG9">
    <property type="expression patterns" value="baseline and differential"/>
</dbReference>
<dbReference type="GO" id="GO:0005737">
    <property type="term" value="C:cytoplasm"/>
    <property type="evidence" value="ECO:0007005"/>
    <property type="project" value="TAIR"/>
</dbReference>
<dbReference type="GO" id="GO:0005576">
    <property type="term" value="C:extracellular region"/>
    <property type="evidence" value="ECO:0007669"/>
    <property type="project" value="UniProtKB-KW"/>
</dbReference>
<dbReference type="GO" id="GO:0005634">
    <property type="term" value="C:nucleus"/>
    <property type="evidence" value="ECO:0007005"/>
    <property type="project" value="TAIR"/>
</dbReference>
<dbReference type="GO" id="GO:0005886">
    <property type="term" value="C:plasma membrane"/>
    <property type="evidence" value="ECO:0007669"/>
    <property type="project" value="UniProtKB-SubCell"/>
</dbReference>
<dbReference type="GO" id="GO:0098552">
    <property type="term" value="C:side of membrane"/>
    <property type="evidence" value="ECO:0007669"/>
    <property type="project" value="UniProtKB-KW"/>
</dbReference>
<dbReference type="GO" id="GO:0042973">
    <property type="term" value="F:glucan endo-1,3-beta-D-glucosidase activity"/>
    <property type="evidence" value="ECO:0007669"/>
    <property type="project" value="UniProtKB-EC"/>
</dbReference>
<dbReference type="GO" id="GO:0005975">
    <property type="term" value="P:carbohydrate metabolic process"/>
    <property type="evidence" value="ECO:0007669"/>
    <property type="project" value="InterPro"/>
</dbReference>
<dbReference type="GO" id="GO:0071555">
    <property type="term" value="P:cell wall organization"/>
    <property type="evidence" value="ECO:0007669"/>
    <property type="project" value="UniProtKB-KW"/>
</dbReference>
<dbReference type="GO" id="GO:0006952">
    <property type="term" value="P:defense response"/>
    <property type="evidence" value="ECO:0007669"/>
    <property type="project" value="UniProtKB-KW"/>
</dbReference>
<dbReference type="FunFam" id="3.20.20.80:FF:000005">
    <property type="entry name" value="Glucan endo-1,3-beta-glucosidase 14"/>
    <property type="match status" value="1"/>
</dbReference>
<dbReference type="Gene3D" id="3.20.20.80">
    <property type="entry name" value="Glycosidases"/>
    <property type="match status" value="1"/>
</dbReference>
<dbReference type="InterPro" id="IPR000490">
    <property type="entry name" value="Glyco_hydro_17"/>
</dbReference>
<dbReference type="InterPro" id="IPR044965">
    <property type="entry name" value="Glyco_hydro_17_plant"/>
</dbReference>
<dbReference type="InterPro" id="IPR017853">
    <property type="entry name" value="Glycoside_hydrolase_SF"/>
</dbReference>
<dbReference type="PANTHER" id="PTHR32227">
    <property type="entry name" value="GLUCAN ENDO-1,3-BETA-GLUCOSIDASE BG1-RELATED-RELATED"/>
    <property type="match status" value="1"/>
</dbReference>
<dbReference type="Pfam" id="PF00332">
    <property type="entry name" value="Glyco_hydro_17"/>
    <property type="match status" value="1"/>
</dbReference>
<dbReference type="SUPFAM" id="SSF51445">
    <property type="entry name" value="(Trans)glycosidases"/>
    <property type="match status" value="1"/>
</dbReference>
<feature type="signal peptide" evidence="2">
    <location>
        <begin position="1"/>
        <end position="21"/>
    </location>
</feature>
<feature type="chain" id="PRO_0000251275" description="Glucan endo-1,3-beta-glucosidase 14">
    <location>
        <begin position="22"/>
        <end position="359"/>
    </location>
</feature>
<feature type="propeptide" id="PRO_0000251276" description="Removed in mature form" evidence="2">
    <location>
        <begin position="360"/>
        <end position="392"/>
    </location>
</feature>
<feature type="active site" description="Proton donor" evidence="1">
    <location>
        <position position="122"/>
    </location>
</feature>
<feature type="active site" description="Nucleophile" evidence="1">
    <location>
        <position position="267"/>
    </location>
</feature>
<feature type="lipid moiety-binding region" description="GPI-anchor amidated serine" evidence="2">
    <location>
        <position position="359"/>
    </location>
</feature>
<feature type="glycosylation site" description="N-linked (GlcNAc...) asparagine" evidence="2">
    <location>
        <position position="54"/>
    </location>
</feature>
<feature type="glycosylation site" description="N-linked (GlcNAc...) asparagine" evidence="2">
    <location>
        <position position="89"/>
    </location>
</feature>
<feature type="splice variant" id="VSP_020754" description="In isoform 3." evidence="3">
    <location>
        <begin position="1"/>
        <end position="78"/>
    </location>
</feature>
<feature type="splice variant" id="VSP_020755" description="In isoform 2." evidence="3">
    <original>ILNLWRVVMGLAVAWFILDMGDKMRMR</original>
    <variation>VNSSFHFLYLHF</variation>
    <location>
        <begin position="366"/>
        <end position="392"/>
    </location>
</feature>
<keyword id="KW-0025">Alternative splicing</keyword>
<keyword id="KW-1003">Cell membrane</keyword>
<keyword id="KW-0134">Cell wall</keyword>
<keyword id="KW-0961">Cell wall biogenesis/degradation</keyword>
<keyword id="KW-0963">Cytoplasm</keyword>
<keyword id="KW-0325">Glycoprotein</keyword>
<keyword id="KW-0326">Glycosidase</keyword>
<keyword id="KW-0336">GPI-anchor</keyword>
<keyword id="KW-0378">Hydrolase</keyword>
<keyword id="KW-0449">Lipoprotein</keyword>
<keyword id="KW-0472">Membrane</keyword>
<keyword id="KW-0611">Plant defense</keyword>
<keyword id="KW-1185">Reference proteome</keyword>
<keyword id="KW-0964">Secreted</keyword>
<keyword id="KW-0732">Signal</keyword>
<comment type="catalytic activity">
    <reaction>
        <text>Hydrolysis of (1-&gt;3)-beta-D-glucosidic linkages in (1-&gt;3)-beta-D-glucans.</text>
        <dbReference type="EC" id="3.2.1.39"/>
    </reaction>
</comment>
<comment type="subcellular location">
    <molecule>Isoform 1</molecule>
    <subcellularLocation>
        <location evidence="3">Cell membrane</location>
        <topology evidence="3">Lipid-anchor</topology>
        <topology evidence="3">GPI-anchor</topology>
        <orientation evidence="3">Extracellular side</orientation>
    </subcellularLocation>
    <subcellularLocation>
        <location evidence="3">Secreted</location>
        <location evidence="3">Cell wall</location>
    </subcellularLocation>
</comment>
<comment type="subcellular location">
    <molecule>Isoform 2</molecule>
    <subcellularLocation>
        <location evidence="3">Secreted</location>
        <location evidence="3">Cell wall</location>
    </subcellularLocation>
</comment>
<comment type="subcellular location">
    <molecule>Isoform 3</molecule>
    <subcellularLocation>
        <location evidence="3">Cytoplasm</location>
    </subcellularLocation>
</comment>
<comment type="alternative products">
    <event type="alternative splicing"/>
    <isoform>
        <id>Q9ZQG9-1</id>
        <name>1</name>
        <sequence type="displayed"/>
    </isoform>
    <isoform>
        <id>Q9ZQG9-2</id>
        <name>2</name>
        <sequence type="described" ref="VSP_020755"/>
    </isoform>
    <isoform>
        <id>Q9ZQG9-3</id>
        <name>3</name>
        <sequence type="described" ref="VSP_020754"/>
    </isoform>
</comment>
<comment type="miscellaneous">
    <molecule>Isoform 2</molecule>
    <text evidence="3">Has no GPI-anchor.</text>
</comment>
<comment type="miscellaneous">
    <molecule>Isoform 3</molecule>
    <text evidence="3">Has no GPI-anchor.</text>
</comment>
<comment type="similarity">
    <text evidence="3">Belongs to the glycosyl hydrolase 17 family.</text>
</comment>
<proteinExistence type="evidence at transcript level"/>